<proteinExistence type="inferred from homology"/>
<dbReference type="EC" id="2.5.1.145" evidence="1"/>
<dbReference type="EMBL" id="BA000016">
    <property type="protein sequence ID" value="BAB82220.1"/>
    <property type="molecule type" value="Genomic_DNA"/>
</dbReference>
<dbReference type="RefSeq" id="WP_011010940.1">
    <property type="nucleotide sequence ID" value="NC_003366.1"/>
</dbReference>
<dbReference type="SMR" id="Q8XHH1"/>
<dbReference type="STRING" id="195102.gene:10491848"/>
<dbReference type="KEGG" id="cpe:CPE2514"/>
<dbReference type="HOGENOM" id="CLU_013386_1_2_9"/>
<dbReference type="UniPathway" id="UPA00664"/>
<dbReference type="Proteomes" id="UP000000818">
    <property type="component" value="Chromosome"/>
</dbReference>
<dbReference type="GO" id="GO:0005886">
    <property type="term" value="C:plasma membrane"/>
    <property type="evidence" value="ECO:0007669"/>
    <property type="project" value="UniProtKB-SubCell"/>
</dbReference>
<dbReference type="GO" id="GO:0008961">
    <property type="term" value="F:phosphatidylglycerol-prolipoprotein diacylglyceryl transferase activity"/>
    <property type="evidence" value="ECO:0007669"/>
    <property type="project" value="UniProtKB-UniRule"/>
</dbReference>
<dbReference type="GO" id="GO:0042158">
    <property type="term" value="P:lipoprotein biosynthetic process"/>
    <property type="evidence" value="ECO:0007669"/>
    <property type="project" value="UniProtKB-UniRule"/>
</dbReference>
<dbReference type="HAMAP" id="MF_01147">
    <property type="entry name" value="Lgt"/>
    <property type="match status" value="1"/>
</dbReference>
<dbReference type="InterPro" id="IPR001640">
    <property type="entry name" value="Lgt"/>
</dbReference>
<dbReference type="NCBIfam" id="TIGR00544">
    <property type="entry name" value="lgt"/>
    <property type="match status" value="1"/>
</dbReference>
<dbReference type="NCBIfam" id="NF000778">
    <property type="entry name" value="PRK00052.3-4"/>
    <property type="match status" value="1"/>
</dbReference>
<dbReference type="PANTHER" id="PTHR30589:SF0">
    <property type="entry name" value="PHOSPHATIDYLGLYCEROL--PROLIPOPROTEIN DIACYLGLYCERYL TRANSFERASE"/>
    <property type="match status" value="1"/>
</dbReference>
<dbReference type="PANTHER" id="PTHR30589">
    <property type="entry name" value="PROLIPOPROTEIN DIACYLGLYCERYL TRANSFERASE"/>
    <property type="match status" value="1"/>
</dbReference>
<dbReference type="Pfam" id="PF01790">
    <property type="entry name" value="LGT"/>
    <property type="match status" value="1"/>
</dbReference>
<protein>
    <recommendedName>
        <fullName evidence="1">Phosphatidylglycerol--prolipoprotein diacylglyceryl transferase 2</fullName>
        <ecNumber evidence="1">2.5.1.145</ecNumber>
    </recommendedName>
</protein>
<organism>
    <name type="scientific">Clostridium perfringens (strain 13 / Type A)</name>
    <dbReference type="NCBI Taxonomy" id="195102"/>
    <lineage>
        <taxon>Bacteria</taxon>
        <taxon>Bacillati</taxon>
        <taxon>Bacillota</taxon>
        <taxon>Clostridia</taxon>
        <taxon>Eubacteriales</taxon>
        <taxon>Clostridiaceae</taxon>
        <taxon>Clostridium</taxon>
    </lineage>
</organism>
<evidence type="ECO:0000255" key="1">
    <source>
        <dbReference type="HAMAP-Rule" id="MF_01147"/>
    </source>
</evidence>
<comment type="function">
    <text evidence="1">Catalyzes the transfer of the diacylglyceryl group from phosphatidylglycerol to the sulfhydryl group of the N-terminal cysteine of a prolipoprotein, the first step in the formation of mature lipoproteins.</text>
</comment>
<comment type="catalytic activity">
    <reaction evidence="1">
        <text>L-cysteinyl-[prolipoprotein] + a 1,2-diacyl-sn-glycero-3-phospho-(1'-sn-glycerol) = an S-1,2-diacyl-sn-glyceryl-L-cysteinyl-[prolipoprotein] + sn-glycerol 1-phosphate + H(+)</text>
        <dbReference type="Rhea" id="RHEA:56712"/>
        <dbReference type="Rhea" id="RHEA-COMP:14679"/>
        <dbReference type="Rhea" id="RHEA-COMP:14680"/>
        <dbReference type="ChEBI" id="CHEBI:15378"/>
        <dbReference type="ChEBI" id="CHEBI:29950"/>
        <dbReference type="ChEBI" id="CHEBI:57685"/>
        <dbReference type="ChEBI" id="CHEBI:64716"/>
        <dbReference type="ChEBI" id="CHEBI:140658"/>
        <dbReference type="EC" id="2.5.1.145"/>
    </reaction>
</comment>
<comment type="pathway">
    <text evidence="1">Protein modification; lipoprotein biosynthesis (diacylglyceryl transfer).</text>
</comment>
<comment type="subcellular location">
    <subcellularLocation>
        <location evidence="1">Cell membrane</location>
        <topology evidence="1">Multi-pass membrane protein</topology>
    </subcellularLocation>
</comment>
<comment type="similarity">
    <text evidence="1">Belongs to the Lgt family.</text>
</comment>
<keyword id="KW-1003">Cell membrane</keyword>
<keyword id="KW-0472">Membrane</keyword>
<keyword id="KW-1185">Reference proteome</keyword>
<keyword id="KW-0808">Transferase</keyword>
<keyword id="KW-0812">Transmembrane</keyword>
<keyword id="KW-1133">Transmembrane helix</keyword>
<sequence>MRIVLGEIFGLKIYSYGFMIGLGIICATLLFLKRGTQRGYNEDKLFNATILTVISGILGGKILYIITEWKTVMQDPSLIFRDFGNGFVIYGAIIGGALGIALCSLKNKWNVLELADLVVPGLALAQGFGRIGCLLAGCCYGAETTSSIGIIFPADSLAPAGVPLYPTQIFSSIFDFALGLFLLWYGNKNKEKGKTMSMYMIIYSIGRFFVEFLRNDPRGSVGLLSTSQFISIFILIGGILLYNINKLKGRKETGEK</sequence>
<reference key="1">
    <citation type="journal article" date="2002" name="Proc. Natl. Acad. Sci. U.S.A.">
        <title>Complete genome sequence of Clostridium perfringens, an anaerobic flesh-eater.</title>
        <authorList>
            <person name="Shimizu T."/>
            <person name="Ohtani K."/>
            <person name="Hirakawa H."/>
            <person name="Ohshima K."/>
            <person name="Yamashita A."/>
            <person name="Shiba T."/>
            <person name="Ogasawara N."/>
            <person name="Hattori M."/>
            <person name="Kuhara S."/>
            <person name="Hayashi H."/>
        </authorList>
    </citation>
    <scope>NUCLEOTIDE SEQUENCE [LARGE SCALE GENOMIC DNA]</scope>
    <source>
        <strain>13 / Type A</strain>
    </source>
</reference>
<name>LGT2_CLOPE</name>
<accession>Q8XHH1</accession>
<feature type="chain" id="PRO_0000172587" description="Phosphatidylglycerol--prolipoprotein diacylglyceryl transferase 2">
    <location>
        <begin position="1"/>
        <end position="256"/>
    </location>
</feature>
<feature type="transmembrane region" description="Helical" evidence="1">
    <location>
        <begin position="11"/>
        <end position="31"/>
    </location>
</feature>
<feature type="transmembrane region" description="Helical" evidence="1">
    <location>
        <begin position="46"/>
        <end position="66"/>
    </location>
</feature>
<feature type="transmembrane region" description="Helical" evidence="1">
    <location>
        <begin position="83"/>
        <end position="103"/>
    </location>
</feature>
<feature type="transmembrane region" description="Helical" evidence="1">
    <location>
        <begin position="142"/>
        <end position="162"/>
    </location>
</feature>
<feature type="transmembrane region" description="Helical" evidence="1">
    <location>
        <begin position="164"/>
        <end position="184"/>
    </location>
</feature>
<feature type="transmembrane region" description="Helical" evidence="1">
    <location>
        <begin position="221"/>
        <end position="241"/>
    </location>
</feature>
<feature type="binding site" evidence="1">
    <location>
        <position position="130"/>
    </location>
    <ligand>
        <name>a 1,2-diacyl-sn-glycero-3-phospho-(1'-sn-glycerol)</name>
        <dbReference type="ChEBI" id="CHEBI:64716"/>
    </ligand>
</feature>
<gene>
    <name evidence="1" type="primary">lgt2</name>
    <name type="ordered locus">CPE2514</name>
</gene>